<comment type="function">
    <text evidence="1">Counteracts the antiviral effects of host IFN-gamma. Acts as a soluble IFN-gamma receptor and thus inhibits the interaction between host IFN-gamma and its receptor.</text>
</comment>
<comment type="subunit">
    <text evidence="1">Homodimer. Interacts with host IFNG.</text>
</comment>
<comment type="subcellular location">
    <subcellularLocation>
        <location evidence="1">Secreted</location>
    </subcellularLocation>
</comment>
<comment type="induction">
    <text>Expressed in the early phase of the viral replicative cycle.</text>
</comment>
<comment type="similarity">
    <text evidence="4">Belongs to the type II cytokine receptor family.</text>
</comment>
<reference key="1">
    <citation type="journal article" date="2022" name="J. Infect. Dis.">
        <title>Exportation of Monkeypox virus from the African continent.</title>
        <authorList>
            <person name="Mauldin M.R."/>
            <person name="McCollum A.M."/>
            <person name="Nakazawa Y.J."/>
            <person name="Mandra A."/>
            <person name="Whitehouse E.R."/>
            <person name="Davidson W."/>
            <person name="Zhao H."/>
            <person name="Gao J."/>
            <person name="Li Y."/>
            <person name="Doty J."/>
            <person name="Yinka-Ogunleye A."/>
            <person name="Akinpelu A."/>
            <person name="Aruna O."/>
            <person name="Naidoo D."/>
            <person name="Lewandowski K."/>
            <person name="Afrough B."/>
            <person name="Graham V."/>
            <person name="Aarons E."/>
            <person name="Hewson R."/>
            <person name="Vipond R."/>
            <person name="Dunning J."/>
            <person name="Chand M."/>
            <person name="Brown C."/>
            <person name="Cohen-Gihon I."/>
            <person name="Erez N."/>
            <person name="Shifman O."/>
            <person name="Israeli O."/>
            <person name="Sharon M."/>
            <person name="Schwartz E."/>
            <person name="Beth-Din A."/>
            <person name="Zvi A."/>
            <person name="Mak T.M."/>
            <person name="Ng Y.K."/>
            <person name="Cui L."/>
            <person name="Lin R.T.P."/>
            <person name="Olson V.A."/>
            <person name="Brooks T."/>
            <person name="Paran N."/>
            <person name="Ihekweazu C."/>
            <person name="Reynolds M.G."/>
        </authorList>
    </citation>
    <scope>NUCLEOTIDE SEQUENCE [LARGE SCALE GENOMIC DNA]</scope>
    <source>
        <strain>MPXV-M5312_HM12_Rivers</strain>
    </source>
</reference>
<gene>
    <name type="primary">OPG193</name>
    <name type="ORF">MPXVgp170</name>
</gene>
<name>PG193_MONPV</name>
<organismHost>
    <name type="scientific">Cynomys gunnisoni</name>
    <name type="common">Gunnison's prairie dog</name>
    <name type="synonym">Spermophilus gunnisoni</name>
    <dbReference type="NCBI Taxonomy" id="45479"/>
</organismHost>
<organismHost>
    <name type="scientific">Cynomys leucurus</name>
    <name type="common">White-tailed prairie dog</name>
    <dbReference type="NCBI Taxonomy" id="99825"/>
</organismHost>
<organismHost>
    <name type="scientific">Cynomys ludovicianus</name>
    <name type="common">Black-tailed prairie dog</name>
    <dbReference type="NCBI Taxonomy" id="45480"/>
</organismHost>
<organismHost>
    <name type="scientific">Cynomys mexicanus</name>
    <name type="common">Mexican prairie dog</name>
    <dbReference type="NCBI Taxonomy" id="99826"/>
</organismHost>
<organismHost>
    <name type="scientific">Cynomys parvidens</name>
    <name type="common">Utah prairie dog</name>
    <dbReference type="NCBI Taxonomy" id="99827"/>
</organismHost>
<organismHost>
    <name type="scientific">Gliridae</name>
    <name type="common">dormice</name>
    <dbReference type="NCBI Taxonomy" id="30650"/>
</organismHost>
<organismHost>
    <name type="scientific">Heliosciurus ruwenzorii</name>
    <name type="common">Ruwenzori sun squirrel</name>
    <dbReference type="NCBI Taxonomy" id="226685"/>
</organismHost>
<organismHost>
    <name type="scientific">Homo sapiens</name>
    <name type="common">Human</name>
    <dbReference type="NCBI Taxonomy" id="9606"/>
</organismHost>
<organismHost>
    <name type="scientific">Mus musculus</name>
    <name type="common">Mouse</name>
    <dbReference type="NCBI Taxonomy" id="10090"/>
</organismHost>
<proteinExistence type="evidence at transcript level"/>
<protein>
    <recommendedName>
        <fullName>Soluble interferon gamma receptor OPG193</fullName>
    </recommendedName>
</protein>
<dbReference type="EMBL" id="MT903340">
    <property type="protein sequence ID" value="QNP13038.1"/>
    <property type="molecule type" value="Genomic_DNA"/>
</dbReference>
<dbReference type="RefSeq" id="YP_010377165.1">
    <property type="nucleotide sequence ID" value="NC_063383.1"/>
</dbReference>
<dbReference type="SMR" id="A0A7H0DNF5"/>
<dbReference type="GeneID" id="72551579"/>
<dbReference type="Proteomes" id="UP000516359">
    <property type="component" value="Genome"/>
</dbReference>
<dbReference type="GO" id="GO:0005576">
    <property type="term" value="C:extracellular region"/>
    <property type="evidence" value="ECO:0007669"/>
    <property type="project" value="UniProtKB-SubCell"/>
</dbReference>
<dbReference type="GO" id="GO:0004896">
    <property type="term" value="F:cytokine receptor activity"/>
    <property type="evidence" value="ECO:0007669"/>
    <property type="project" value="InterPro"/>
</dbReference>
<dbReference type="GO" id="GO:0052170">
    <property type="term" value="P:symbiont-mediated suppression of host innate immune response"/>
    <property type="evidence" value="ECO:0007669"/>
    <property type="project" value="UniProtKB-KW"/>
</dbReference>
<dbReference type="GO" id="GO:0039502">
    <property type="term" value="P:symbiont-mediated suppression of host type I interferon-mediated signaling pathway"/>
    <property type="evidence" value="ECO:0007669"/>
    <property type="project" value="UniProtKB-KW"/>
</dbReference>
<dbReference type="GO" id="GO:0060333">
    <property type="term" value="P:type II interferon-mediated signaling pathway"/>
    <property type="evidence" value="ECO:0007669"/>
    <property type="project" value="InterPro"/>
</dbReference>
<dbReference type="Gene3D" id="6.10.140.1480">
    <property type="match status" value="1"/>
</dbReference>
<dbReference type="Gene3D" id="2.60.40.10">
    <property type="entry name" value="Immunoglobulins"/>
    <property type="match status" value="2"/>
</dbReference>
<dbReference type="InterPro" id="IPR054752">
    <property type="entry name" value="CR4_N"/>
</dbReference>
<dbReference type="InterPro" id="IPR036116">
    <property type="entry name" value="FN3_sf"/>
</dbReference>
<dbReference type="InterPro" id="IPR021126">
    <property type="entry name" value="IFN_gamma_rc_D2_pox/mammal"/>
</dbReference>
<dbReference type="InterPro" id="IPR013783">
    <property type="entry name" value="Ig-like_fold"/>
</dbReference>
<dbReference type="Pfam" id="PF22325">
    <property type="entry name" value="CR4_N"/>
    <property type="match status" value="1"/>
</dbReference>
<dbReference type="Pfam" id="PF07140">
    <property type="entry name" value="IFNGR1_D2"/>
    <property type="match status" value="1"/>
</dbReference>
<dbReference type="SUPFAM" id="SSF49265">
    <property type="entry name" value="Fibronectin type III"/>
    <property type="match status" value="2"/>
</dbReference>
<keyword id="KW-0244">Early protein</keyword>
<keyword id="KW-0325">Glycoprotein</keyword>
<keyword id="KW-0945">Host-virus interaction</keyword>
<keyword id="KW-1090">Inhibition of host innate immune response by virus</keyword>
<keyword id="KW-1114">Inhibition of host interferon signaling pathway by virus</keyword>
<keyword id="KW-0922">Interferon antiviral system evasion</keyword>
<keyword id="KW-1185">Reference proteome</keyword>
<keyword id="KW-0964">Secreted</keyword>
<keyword id="KW-0732">Signal</keyword>
<keyword id="KW-0899">Viral immunoevasion</keyword>
<evidence type="ECO:0000250" key="1">
    <source>
        <dbReference type="UniProtKB" id="P24770"/>
    </source>
</evidence>
<evidence type="ECO:0000255" key="2"/>
<evidence type="ECO:0000255" key="3">
    <source>
        <dbReference type="PROSITE-ProRule" id="PRU00498"/>
    </source>
</evidence>
<evidence type="ECO:0000305" key="4"/>
<feature type="signal peptide" evidence="2">
    <location>
        <begin position="1"/>
        <end position="17"/>
    </location>
</feature>
<feature type="chain" id="PRO_0000457600" description="Soluble interferon gamma receptor OPG193" evidence="2">
    <location>
        <begin position="18"/>
        <end position="267"/>
    </location>
</feature>
<feature type="glycosylation site" description="N-linked (GlcNAc...) asparagine; by host" evidence="3">
    <location>
        <position position="42"/>
    </location>
</feature>
<feature type="glycosylation site" description="N-linked (GlcNAc...) asparagine; by host" evidence="3">
    <location>
        <position position="150"/>
    </location>
</feature>
<accession>A0A7H0DNF5</accession>
<sequence>MRYIIILAVLFINSIHAKITSYKFESVNFDSKIEWTGDGLYNISLKNYGIKTWQTMYTNVPEGTYDISGFPKNDFVSFWVKFEQGDYKVEEYCTGLCVEVKIGPPTVILTEYDDHINLFIEHPYATRGSKKIPIYKRGDMCDIYLLYTANFTFGDSEEPVTYDIDDYDCTSTGCSIDFATTEKVCVTAQGATEGFLEKITPWSSEVCLTPKKNVYTCAIRSKEDVPNFKDKIARVITRKFNKQSQSYLTKFLGSTSNDVTTFLSILD</sequence>
<organism>
    <name type="scientific">Monkeypox virus</name>
    <dbReference type="NCBI Taxonomy" id="10244"/>
    <lineage>
        <taxon>Viruses</taxon>
        <taxon>Varidnaviria</taxon>
        <taxon>Bamfordvirae</taxon>
        <taxon>Nucleocytoviricota</taxon>
        <taxon>Pokkesviricetes</taxon>
        <taxon>Chitovirales</taxon>
        <taxon>Poxviridae</taxon>
        <taxon>Chordopoxvirinae</taxon>
        <taxon>Orthopoxvirus</taxon>
    </lineage>
</organism>